<reference key="1">
    <citation type="journal article" date="2004" name="Science">
        <title>Illuminating the evolutionary history of chlamydiae.</title>
        <authorList>
            <person name="Horn M."/>
            <person name="Collingro A."/>
            <person name="Schmitz-Esser S."/>
            <person name="Beier C.L."/>
            <person name="Purkhold U."/>
            <person name="Fartmann B."/>
            <person name="Brandt P."/>
            <person name="Nyakatura G.J."/>
            <person name="Droege M."/>
            <person name="Frishman D."/>
            <person name="Rattei T."/>
            <person name="Mewes H.-W."/>
            <person name="Wagner M."/>
        </authorList>
    </citation>
    <scope>NUCLEOTIDE SEQUENCE [LARGE SCALE GENOMIC DNA]</scope>
    <source>
        <strain>UWE25</strain>
    </source>
</reference>
<comment type="function">
    <text evidence="1">NDH-1 shuttles electrons from NADH, via FMN and iron-sulfur (Fe-S) centers, to quinones in the respiratory chain. The immediate electron acceptor for the enzyme in this species is believed to be ubiquinone. Couples the redox reaction to proton translocation (for every two electrons transferred, four hydrogen ions are translocated across the cytoplasmic membrane), and thus conserves the redox energy in a proton gradient.</text>
</comment>
<comment type="catalytic activity">
    <reaction evidence="1">
        <text>a quinone + NADH + 5 H(+)(in) = a quinol + NAD(+) + 4 H(+)(out)</text>
        <dbReference type="Rhea" id="RHEA:57888"/>
        <dbReference type="ChEBI" id="CHEBI:15378"/>
        <dbReference type="ChEBI" id="CHEBI:24646"/>
        <dbReference type="ChEBI" id="CHEBI:57540"/>
        <dbReference type="ChEBI" id="CHEBI:57945"/>
        <dbReference type="ChEBI" id="CHEBI:132124"/>
    </reaction>
</comment>
<comment type="subunit">
    <text evidence="1">NDH-1 is composed of 14 different subunits. Subunits NuoB, C, D, E, F, and G constitute the peripheral sector of the complex.</text>
</comment>
<comment type="subcellular location">
    <subcellularLocation>
        <location evidence="1">Cell inner membrane</location>
        <topology evidence="1">Peripheral membrane protein</topology>
        <orientation evidence="1">Cytoplasmic side</orientation>
    </subcellularLocation>
</comment>
<comment type="similarity">
    <text evidence="1">Belongs to the complex I 49 kDa subunit family.</text>
</comment>
<accession>Q6MDR3</accession>
<gene>
    <name evidence="1" type="primary">nuoD</name>
    <name type="ordered locus">pc0562</name>
</gene>
<proteinExistence type="inferred from homology"/>
<dbReference type="EC" id="7.1.1.-" evidence="1"/>
<dbReference type="EMBL" id="BX908798">
    <property type="protein sequence ID" value="CAF23286.1"/>
    <property type="molecule type" value="Genomic_DNA"/>
</dbReference>
<dbReference type="RefSeq" id="WP_011175112.1">
    <property type="nucleotide sequence ID" value="NC_005861.2"/>
</dbReference>
<dbReference type="SMR" id="Q6MDR3"/>
<dbReference type="STRING" id="264201.pc0562"/>
<dbReference type="KEGG" id="pcu:PC_RS02685"/>
<dbReference type="eggNOG" id="COG0649">
    <property type="taxonomic scope" value="Bacteria"/>
</dbReference>
<dbReference type="HOGENOM" id="CLU_015134_1_2_0"/>
<dbReference type="OrthoDB" id="9801496at2"/>
<dbReference type="Proteomes" id="UP000000529">
    <property type="component" value="Chromosome"/>
</dbReference>
<dbReference type="GO" id="GO:0005886">
    <property type="term" value="C:plasma membrane"/>
    <property type="evidence" value="ECO:0007669"/>
    <property type="project" value="UniProtKB-SubCell"/>
</dbReference>
<dbReference type="GO" id="GO:0051287">
    <property type="term" value="F:NAD binding"/>
    <property type="evidence" value="ECO:0007669"/>
    <property type="project" value="InterPro"/>
</dbReference>
<dbReference type="GO" id="GO:0050136">
    <property type="term" value="F:NADH:ubiquinone reductase (non-electrogenic) activity"/>
    <property type="evidence" value="ECO:0007669"/>
    <property type="project" value="UniProtKB-UniRule"/>
</dbReference>
<dbReference type="GO" id="GO:0048038">
    <property type="term" value="F:quinone binding"/>
    <property type="evidence" value="ECO:0007669"/>
    <property type="project" value="UniProtKB-KW"/>
</dbReference>
<dbReference type="Gene3D" id="1.10.645.10">
    <property type="entry name" value="Cytochrome-c3 Hydrogenase, chain B"/>
    <property type="match status" value="1"/>
</dbReference>
<dbReference type="HAMAP" id="MF_01358">
    <property type="entry name" value="NDH1_NuoD"/>
    <property type="match status" value="1"/>
</dbReference>
<dbReference type="InterPro" id="IPR001135">
    <property type="entry name" value="NADH_Q_OxRdtase_suD"/>
</dbReference>
<dbReference type="InterPro" id="IPR022885">
    <property type="entry name" value="NDH1_su_D/H"/>
</dbReference>
<dbReference type="InterPro" id="IPR029014">
    <property type="entry name" value="NiFe-Hase_large"/>
</dbReference>
<dbReference type="NCBIfam" id="TIGR01962">
    <property type="entry name" value="NuoD"/>
    <property type="match status" value="1"/>
</dbReference>
<dbReference type="NCBIfam" id="NF004739">
    <property type="entry name" value="PRK06075.1"/>
    <property type="match status" value="1"/>
</dbReference>
<dbReference type="PANTHER" id="PTHR11993:SF10">
    <property type="entry name" value="NADH DEHYDROGENASE [UBIQUINONE] IRON-SULFUR PROTEIN 2, MITOCHONDRIAL"/>
    <property type="match status" value="1"/>
</dbReference>
<dbReference type="PANTHER" id="PTHR11993">
    <property type="entry name" value="NADH-UBIQUINONE OXIDOREDUCTASE 49 KDA SUBUNIT"/>
    <property type="match status" value="1"/>
</dbReference>
<dbReference type="Pfam" id="PF00346">
    <property type="entry name" value="Complex1_49kDa"/>
    <property type="match status" value="1"/>
</dbReference>
<dbReference type="SUPFAM" id="SSF56762">
    <property type="entry name" value="HydB/Nqo4-like"/>
    <property type="match status" value="1"/>
</dbReference>
<sequence>MTKVSKERLKELEESGDVMELNLGPQHPSTHGVLRLKLRLEGEVVLSCDPVIGYLHTGVEKECESRTYHQVFTLVDRLDYLSGPAEEQAFAGALERLMNIEVPERAQTIRIILLELSRIASHLLWAGTSALELNMSSVFMYSFAEREKILDLFEQVSGARMFPSLWRIGGLAKDLNSDFISHLKEFISGFQKIWKELDRLLTDNFVWCKRLQGVAVIDQEICKQYMCTGPVLRASGISYDIRKAYPYLGYENYNFDIPTHIDGDSYARYLVRMEEMLQSISIIEQAIARLKPGVVLTNDRKVALPPRKELARSMEAVIHQFKLISEGLHPPVGSVYNCVESARGELGHYVISDGTPKPYRLRVRSPSFSHVEVLKKVLRGHVISDVVVAIASVDPILGDVDR</sequence>
<evidence type="ECO:0000255" key="1">
    <source>
        <dbReference type="HAMAP-Rule" id="MF_01358"/>
    </source>
</evidence>
<name>NUOD_PARUW</name>
<keyword id="KW-0997">Cell inner membrane</keyword>
<keyword id="KW-1003">Cell membrane</keyword>
<keyword id="KW-0472">Membrane</keyword>
<keyword id="KW-0520">NAD</keyword>
<keyword id="KW-0874">Quinone</keyword>
<keyword id="KW-1185">Reference proteome</keyword>
<keyword id="KW-1278">Translocase</keyword>
<keyword id="KW-0813">Transport</keyword>
<keyword id="KW-0830">Ubiquinone</keyword>
<feature type="chain" id="PRO_0000357891" description="NADH-quinone oxidoreductase subunit D">
    <location>
        <begin position="1"/>
        <end position="402"/>
    </location>
</feature>
<protein>
    <recommendedName>
        <fullName evidence="1">NADH-quinone oxidoreductase subunit D</fullName>
        <ecNumber evidence="1">7.1.1.-</ecNumber>
    </recommendedName>
    <alternativeName>
        <fullName evidence="1">NADH dehydrogenase I subunit D</fullName>
    </alternativeName>
    <alternativeName>
        <fullName evidence="1">NDH-1 subunit D</fullName>
    </alternativeName>
</protein>
<organism>
    <name type="scientific">Protochlamydia amoebophila (strain UWE25)</name>
    <dbReference type="NCBI Taxonomy" id="264201"/>
    <lineage>
        <taxon>Bacteria</taxon>
        <taxon>Pseudomonadati</taxon>
        <taxon>Chlamydiota</taxon>
        <taxon>Chlamydiia</taxon>
        <taxon>Parachlamydiales</taxon>
        <taxon>Parachlamydiaceae</taxon>
        <taxon>Candidatus Protochlamydia</taxon>
    </lineage>
</organism>